<keyword id="KW-0963">Cytoplasm</keyword>
<keyword id="KW-0539">Nucleus</keyword>
<keyword id="KW-1185">Reference proteome</keyword>
<keyword id="KW-0736">Signalosome</keyword>
<evidence type="ECO:0000250" key="1"/>
<evidence type="ECO:0000255" key="2">
    <source>
        <dbReference type="PROSITE-ProRule" id="PRU01185"/>
    </source>
</evidence>
<evidence type="ECO:0000269" key="3">
    <source>
    </source>
</evidence>
<evidence type="ECO:0000305" key="4"/>
<name>CSN8_DICDI</name>
<reference key="1">
    <citation type="journal article" date="2006" name="Eur. J. Cell Biol.">
        <title>The COP9 signalosome regulates cell proliferation of Dictyostelium discoideum.</title>
        <authorList>
            <person name="Rosel D."/>
            <person name="Kimmel A.R."/>
        </authorList>
    </citation>
    <scope>NUCLEOTIDE SEQUENCE [MRNA]</scope>
    <scope>IDENTIFICATION IN THE CSN COMPLEX</scope>
</reference>
<reference key="2">
    <citation type="journal article" date="2002" name="Nature">
        <title>Sequence and analysis of chromosome 2 of Dictyostelium discoideum.</title>
        <authorList>
            <person name="Gloeckner G."/>
            <person name="Eichinger L."/>
            <person name="Szafranski K."/>
            <person name="Pachebat J.A."/>
            <person name="Bankier A.T."/>
            <person name="Dear P.H."/>
            <person name="Lehmann R."/>
            <person name="Baumgart C."/>
            <person name="Parra G."/>
            <person name="Abril J.F."/>
            <person name="Guigo R."/>
            <person name="Kumpf K."/>
            <person name="Tunggal B."/>
            <person name="Cox E.C."/>
            <person name="Quail M.A."/>
            <person name="Platzer M."/>
            <person name="Rosenthal A."/>
            <person name="Noegel A.A."/>
        </authorList>
    </citation>
    <scope>NUCLEOTIDE SEQUENCE [LARGE SCALE GENOMIC DNA]</scope>
    <source>
        <strain>AX4</strain>
    </source>
</reference>
<reference key="3">
    <citation type="journal article" date="2005" name="Nature">
        <title>The genome of the social amoeba Dictyostelium discoideum.</title>
        <authorList>
            <person name="Eichinger L."/>
            <person name="Pachebat J.A."/>
            <person name="Gloeckner G."/>
            <person name="Rajandream M.A."/>
            <person name="Sucgang R."/>
            <person name="Berriman M."/>
            <person name="Song J."/>
            <person name="Olsen R."/>
            <person name="Szafranski K."/>
            <person name="Xu Q."/>
            <person name="Tunggal B."/>
            <person name="Kummerfeld S."/>
            <person name="Madera M."/>
            <person name="Konfortov B.A."/>
            <person name="Rivero F."/>
            <person name="Bankier A.T."/>
            <person name="Lehmann R."/>
            <person name="Hamlin N."/>
            <person name="Davies R."/>
            <person name="Gaudet P."/>
            <person name="Fey P."/>
            <person name="Pilcher K."/>
            <person name="Chen G."/>
            <person name="Saunders D."/>
            <person name="Sodergren E.J."/>
            <person name="Davis P."/>
            <person name="Kerhornou A."/>
            <person name="Nie X."/>
            <person name="Hall N."/>
            <person name="Anjard C."/>
            <person name="Hemphill L."/>
            <person name="Bason N."/>
            <person name="Farbrother P."/>
            <person name="Desany B."/>
            <person name="Just E."/>
            <person name="Morio T."/>
            <person name="Rost R."/>
            <person name="Churcher C.M."/>
            <person name="Cooper J."/>
            <person name="Haydock S."/>
            <person name="van Driessche N."/>
            <person name="Cronin A."/>
            <person name="Goodhead I."/>
            <person name="Muzny D.M."/>
            <person name="Mourier T."/>
            <person name="Pain A."/>
            <person name="Lu M."/>
            <person name="Harper D."/>
            <person name="Lindsay R."/>
            <person name="Hauser H."/>
            <person name="James K.D."/>
            <person name="Quiles M."/>
            <person name="Madan Babu M."/>
            <person name="Saito T."/>
            <person name="Buchrieser C."/>
            <person name="Wardroper A."/>
            <person name="Felder M."/>
            <person name="Thangavelu M."/>
            <person name="Johnson D."/>
            <person name="Knights A."/>
            <person name="Loulseged H."/>
            <person name="Mungall K.L."/>
            <person name="Oliver K."/>
            <person name="Price C."/>
            <person name="Quail M.A."/>
            <person name="Urushihara H."/>
            <person name="Hernandez J."/>
            <person name="Rabbinowitsch E."/>
            <person name="Steffen D."/>
            <person name="Sanders M."/>
            <person name="Ma J."/>
            <person name="Kohara Y."/>
            <person name="Sharp S."/>
            <person name="Simmonds M.N."/>
            <person name="Spiegler S."/>
            <person name="Tivey A."/>
            <person name="Sugano S."/>
            <person name="White B."/>
            <person name="Walker D."/>
            <person name="Woodward J.R."/>
            <person name="Winckler T."/>
            <person name="Tanaka Y."/>
            <person name="Shaulsky G."/>
            <person name="Schleicher M."/>
            <person name="Weinstock G.M."/>
            <person name="Rosenthal A."/>
            <person name="Cox E.C."/>
            <person name="Chisholm R.L."/>
            <person name="Gibbs R.A."/>
            <person name="Loomis W.F."/>
            <person name="Platzer M."/>
            <person name="Kay R.R."/>
            <person name="Williams J.G."/>
            <person name="Dear P.H."/>
            <person name="Noegel A.A."/>
            <person name="Barrell B.G."/>
            <person name="Kuspa A."/>
        </authorList>
    </citation>
    <scope>NUCLEOTIDE SEQUENCE [LARGE SCALE GENOMIC DNA]</scope>
    <source>
        <strain>AX4</strain>
    </source>
</reference>
<protein>
    <recommendedName>
        <fullName>COP9 signalosome complex subunit 8</fullName>
        <shortName>Signalosome subunit 8</shortName>
    </recommendedName>
</protein>
<comment type="function">
    <text>Component of the COP9 signalosome complex (CSN), a complex involved in various cellular and developmental processes. The CSN complex is an essential regulator of the ubiquitin (Ubl) conjugation pathway by mediating the deneddylation of the cullin subunits of E3 ligase complexes, leading to modify the Ubl ligase activity.</text>
</comment>
<comment type="subunit">
    <text evidence="3">Component of the CSN complex. The holocomplex is comprised of 8 subunits csn1-8. In the complex, it probably interacts directly with csn5 and csn8.</text>
</comment>
<comment type="subcellular location">
    <subcellularLocation>
        <location evidence="1">Cytoplasm</location>
    </subcellularLocation>
    <subcellularLocation>
        <location evidence="1">Nucleus</location>
    </subcellularLocation>
</comment>
<comment type="similarity">
    <text evidence="4">Belongs to the CSN8 family.</text>
</comment>
<dbReference type="EMBL" id="DQ309436">
    <property type="protein sequence ID" value="ABC46700.1"/>
    <property type="molecule type" value="mRNA"/>
</dbReference>
<dbReference type="EMBL" id="AAFI02000013">
    <property type="protein sequence ID" value="EAL69486.1"/>
    <property type="molecule type" value="Genomic_DNA"/>
</dbReference>
<dbReference type="RefSeq" id="XP_643634.1">
    <property type="nucleotide sequence ID" value="XM_638542.1"/>
</dbReference>
<dbReference type="SMR" id="Q75K24"/>
<dbReference type="FunCoup" id="Q75K24">
    <property type="interactions" value="559"/>
</dbReference>
<dbReference type="STRING" id="44689.Q75K24"/>
<dbReference type="PaxDb" id="44689-DDB0233107"/>
<dbReference type="EnsemblProtists" id="EAL69486">
    <property type="protein sequence ID" value="EAL69486"/>
    <property type="gene ID" value="DDB_G0275471"/>
</dbReference>
<dbReference type="GeneID" id="8620221"/>
<dbReference type="KEGG" id="ddi:DDB_G0275471"/>
<dbReference type="dictyBase" id="DDB_G0275471">
    <property type="gene designation" value="csn8"/>
</dbReference>
<dbReference type="VEuPathDB" id="AmoebaDB:DDB_G0275471"/>
<dbReference type="eggNOG" id="KOG4414">
    <property type="taxonomic scope" value="Eukaryota"/>
</dbReference>
<dbReference type="HOGENOM" id="CLU_098091_1_1_1"/>
<dbReference type="InParanoid" id="Q75K24"/>
<dbReference type="OMA" id="MRIPDKL"/>
<dbReference type="PhylomeDB" id="Q75K24"/>
<dbReference type="Reactome" id="R-DDI-5696394">
    <property type="pathway name" value="DNA Damage Recognition in GG-NER"/>
</dbReference>
<dbReference type="Reactome" id="R-DDI-6781823">
    <property type="pathway name" value="Formation of TC-NER Pre-Incision Complex"/>
</dbReference>
<dbReference type="Reactome" id="R-DDI-8856825">
    <property type="pathway name" value="Cargo recognition for clathrin-mediated endocytosis"/>
</dbReference>
<dbReference type="Reactome" id="R-DDI-8951664">
    <property type="pathway name" value="Neddylation"/>
</dbReference>
<dbReference type="PRO" id="PR:Q75K24"/>
<dbReference type="Proteomes" id="UP000002195">
    <property type="component" value="Chromosome 2"/>
</dbReference>
<dbReference type="GO" id="GO:0008180">
    <property type="term" value="C:COP9 signalosome"/>
    <property type="evidence" value="ECO:0000353"/>
    <property type="project" value="dictyBase"/>
</dbReference>
<dbReference type="GO" id="GO:0005737">
    <property type="term" value="C:cytoplasm"/>
    <property type="evidence" value="ECO:0007669"/>
    <property type="project" value="UniProtKB-SubCell"/>
</dbReference>
<dbReference type="GO" id="GO:0010387">
    <property type="term" value="P:COP9 signalosome assembly"/>
    <property type="evidence" value="ECO:0007669"/>
    <property type="project" value="InterPro"/>
</dbReference>
<dbReference type="GO" id="GO:0000338">
    <property type="term" value="P:protein deneddylation"/>
    <property type="evidence" value="ECO:0007669"/>
    <property type="project" value="InterPro"/>
</dbReference>
<dbReference type="FunFam" id="1.25.40.990:FF:000040">
    <property type="entry name" value="COP9 signalosome complex subunit 8"/>
    <property type="match status" value="1"/>
</dbReference>
<dbReference type="Gene3D" id="1.25.40.990">
    <property type="match status" value="1"/>
</dbReference>
<dbReference type="InterPro" id="IPR033205">
    <property type="entry name" value="COP9_CSN8"/>
</dbReference>
<dbReference type="InterPro" id="IPR033464">
    <property type="entry name" value="CSN8_PSD8_EIF3K"/>
</dbReference>
<dbReference type="InterPro" id="IPR000717">
    <property type="entry name" value="PCI_dom"/>
</dbReference>
<dbReference type="PANTHER" id="PTHR13339">
    <property type="entry name" value="COP9 SIGNALOSOME COMPLEX SUBUNIT 8"/>
    <property type="match status" value="1"/>
</dbReference>
<dbReference type="PANTHER" id="PTHR13339:SF0">
    <property type="entry name" value="COP9 SIGNALOSOME COMPLEX SUBUNIT 8"/>
    <property type="match status" value="1"/>
</dbReference>
<dbReference type="Pfam" id="PF10075">
    <property type="entry name" value="CSN8_PSD8_EIF3K"/>
    <property type="match status" value="1"/>
</dbReference>
<dbReference type="PROSITE" id="PS50250">
    <property type="entry name" value="PCI"/>
    <property type="match status" value="1"/>
</dbReference>
<gene>
    <name type="primary">csn8</name>
    <name type="ORF">DDB_G0275471</name>
</gene>
<feature type="chain" id="PRO_0000327773" description="COP9 signalosome complex subunit 8">
    <location>
        <begin position="1"/>
        <end position="196"/>
    </location>
</feature>
<feature type="domain" description="PCI" evidence="2">
    <location>
        <begin position="10"/>
        <end position="177"/>
    </location>
</feature>
<sequence>MAFTEIANLISSKNFKAILDYCQRQEIESKNIDLIKSYYGVYLLSYLINNDLINAKHLWKRIPNDFKQSNQQLKNIYTIIKSISQTNPTITYTSLSINIGDDYTPFITTLKENFQQRTFELISNAYSSITVNDCSSYLGISPEDTIKFTTSKCWEHDKASNTLKPVPIQKQSSELPTGNQQIRSLTSYVLFLEKST</sequence>
<organism>
    <name type="scientific">Dictyostelium discoideum</name>
    <name type="common">Social amoeba</name>
    <dbReference type="NCBI Taxonomy" id="44689"/>
    <lineage>
        <taxon>Eukaryota</taxon>
        <taxon>Amoebozoa</taxon>
        <taxon>Evosea</taxon>
        <taxon>Eumycetozoa</taxon>
        <taxon>Dictyostelia</taxon>
        <taxon>Dictyosteliales</taxon>
        <taxon>Dictyosteliaceae</taxon>
        <taxon>Dictyostelium</taxon>
    </lineage>
</organism>
<proteinExistence type="evidence at protein level"/>
<accession>Q75K24</accession>
<accession>Q552P7</accession>